<feature type="chain" id="PRO_1000131185" description="PqqA binding protein">
    <location>
        <begin position="1"/>
        <end position="94"/>
    </location>
</feature>
<evidence type="ECO:0000255" key="1">
    <source>
        <dbReference type="HAMAP-Rule" id="MF_00655"/>
    </source>
</evidence>
<sequence>MNKEQFDVNLVPTWRQGYRFQFEPAQNGFVILYPEGMIKLNESAGAIGQYIDGTNNVSAIIAQLKQQFGDIPEIDNDVIDYMLVAQQQHWIDLV</sequence>
<comment type="function">
    <text evidence="1">Functions as a PqqA binding protein and presents PqqA to PqqE, in the pyrroloquinoline quinone (PQQ) biosynthetic pathway.</text>
</comment>
<comment type="pathway">
    <text evidence="1">Cofactor biosynthesis; pyrroloquinoline quinone biosynthesis.</text>
</comment>
<comment type="subunit">
    <text evidence="1">Monomer. Interacts with PqqE.</text>
</comment>
<comment type="similarity">
    <text evidence="1">Belongs to the PqqD family.</text>
</comment>
<organism>
    <name type="scientific">Acinetobacter baumannii (strain ACICU)</name>
    <dbReference type="NCBI Taxonomy" id="405416"/>
    <lineage>
        <taxon>Bacteria</taxon>
        <taxon>Pseudomonadati</taxon>
        <taxon>Pseudomonadota</taxon>
        <taxon>Gammaproteobacteria</taxon>
        <taxon>Moraxellales</taxon>
        <taxon>Moraxellaceae</taxon>
        <taxon>Acinetobacter</taxon>
        <taxon>Acinetobacter calcoaceticus/baumannii complex</taxon>
    </lineage>
</organism>
<accession>B2I0I4</accession>
<protein>
    <recommendedName>
        <fullName evidence="1">PqqA binding protein</fullName>
    </recommendedName>
    <alternativeName>
        <fullName evidence="1">Coenzyme PQQ synthesis protein D</fullName>
    </alternativeName>
    <alternativeName>
        <fullName evidence="1">Pyrroloquinoline quinone biosynthesis protein D</fullName>
    </alternativeName>
</protein>
<proteinExistence type="inferred from homology"/>
<dbReference type="EMBL" id="CP000863">
    <property type="protein sequence ID" value="ACC57109.1"/>
    <property type="molecule type" value="Genomic_DNA"/>
</dbReference>
<dbReference type="RefSeq" id="WP_001031363.1">
    <property type="nucleotide sequence ID" value="NZ_CP031380.1"/>
</dbReference>
<dbReference type="SMR" id="B2I0I4"/>
<dbReference type="KEGG" id="abc:ACICU_01797"/>
<dbReference type="HOGENOM" id="CLU_163864_2_1_6"/>
<dbReference type="UniPathway" id="UPA00539"/>
<dbReference type="Proteomes" id="UP000008839">
    <property type="component" value="Chromosome"/>
</dbReference>
<dbReference type="GO" id="GO:0048038">
    <property type="term" value="F:quinone binding"/>
    <property type="evidence" value="ECO:0007669"/>
    <property type="project" value="InterPro"/>
</dbReference>
<dbReference type="GO" id="GO:0018189">
    <property type="term" value="P:pyrroloquinoline quinone biosynthetic process"/>
    <property type="evidence" value="ECO:0007669"/>
    <property type="project" value="UniProtKB-UniRule"/>
</dbReference>
<dbReference type="Gene3D" id="1.10.10.1150">
    <property type="entry name" value="Coenzyme PQQ synthesis protein D (PqqD)"/>
    <property type="match status" value="1"/>
</dbReference>
<dbReference type="HAMAP" id="MF_00655">
    <property type="entry name" value="PQQ_syn_PqqD"/>
    <property type="match status" value="1"/>
</dbReference>
<dbReference type="InterPro" id="IPR008792">
    <property type="entry name" value="PQQD"/>
</dbReference>
<dbReference type="InterPro" id="IPR022479">
    <property type="entry name" value="PqqD_bac"/>
</dbReference>
<dbReference type="InterPro" id="IPR041881">
    <property type="entry name" value="PqqD_sf"/>
</dbReference>
<dbReference type="NCBIfam" id="TIGR03859">
    <property type="entry name" value="PQQ_PqqD"/>
    <property type="match status" value="1"/>
</dbReference>
<dbReference type="NCBIfam" id="NF002535">
    <property type="entry name" value="PRK02079.1"/>
    <property type="match status" value="1"/>
</dbReference>
<dbReference type="Pfam" id="PF05402">
    <property type="entry name" value="PqqD"/>
    <property type="match status" value="1"/>
</dbReference>
<name>PQQD_ACIBC</name>
<gene>
    <name evidence="1" type="primary">pqqD</name>
    <name type="ordered locus">ACICU_01797</name>
</gene>
<keyword id="KW-0884">PQQ biosynthesis</keyword>
<reference key="1">
    <citation type="journal article" date="2008" name="Antimicrob. Agents Chemother.">
        <title>Whole-genome pyrosequencing of an epidemic multidrug-resistant Acinetobacter baumannii strain belonging to the European clone II group.</title>
        <authorList>
            <person name="Iacono M."/>
            <person name="Villa L."/>
            <person name="Fortini D."/>
            <person name="Bordoni R."/>
            <person name="Imperi F."/>
            <person name="Bonnal R.J."/>
            <person name="Sicheritz-Ponten T."/>
            <person name="De Bellis G."/>
            <person name="Visca P."/>
            <person name="Cassone A."/>
            <person name="Carattoli A."/>
        </authorList>
    </citation>
    <scope>NUCLEOTIDE SEQUENCE [LARGE SCALE GENOMIC DNA]</scope>
    <source>
        <strain>ACICU</strain>
    </source>
</reference>